<dbReference type="GO" id="GO:0005576">
    <property type="term" value="C:extracellular region"/>
    <property type="evidence" value="ECO:0007669"/>
    <property type="project" value="UniProtKB-SubCell"/>
</dbReference>
<dbReference type="GO" id="GO:0006952">
    <property type="term" value="P:defense response"/>
    <property type="evidence" value="ECO:0007669"/>
    <property type="project" value="UniProtKB-KW"/>
</dbReference>
<comment type="subcellular location">
    <subcellularLocation>
        <location>Secreted</location>
    </subcellularLocation>
</comment>
<comment type="tissue specificity">
    <text>Expressed by the dorsal and submental skin glands.</text>
</comment>
<organism>
    <name type="scientific">Ranoidea citropa</name>
    <name type="common">Australian Blue Mountains tree frog</name>
    <name type="synonym">Litoria citropa</name>
    <dbReference type="NCBI Taxonomy" id="94770"/>
    <lineage>
        <taxon>Eukaryota</taxon>
        <taxon>Metazoa</taxon>
        <taxon>Chordata</taxon>
        <taxon>Craniata</taxon>
        <taxon>Vertebrata</taxon>
        <taxon>Euteleostomi</taxon>
        <taxon>Amphibia</taxon>
        <taxon>Batrachia</taxon>
        <taxon>Anura</taxon>
        <taxon>Neobatrachia</taxon>
        <taxon>Hyloidea</taxon>
        <taxon>Hylidae</taxon>
        <taxon>Pelodryadinae</taxon>
        <taxon>Ranoidea</taxon>
    </lineage>
</organism>
<keyword id="KW-0878">Amphibian defense peptide</keyword>
<keyword id="KW-0903">Direct protein sequencing</keyword>
<keyword id="KW-0964">Secreted</keyword>
<feature type="peptide" id="PRO_0000010201" description="Citropin-3.1.2">
    <location>
        <begin position="1"/>
        <end position="24"/>
    </location>
</feature>
<feature type="peptide" id="PRO_0000010202" description="Citropin-3.1.1">
    <location>
        <begin position="1"/>
        <end position="23"/>
    </location>
</feature>
<feature type="peptide" id="PRO_0000010203" description="Citropin-3.1">
    <location>
        <begin position="1"/>
        <end position="22"/>
    </location>
</feature>
<name>CT31_RANCI</name>
<accession>P81851</accession>
<accession>P81852</accession>
<accession>P81853</accession>
<proteinExistence type="evidence at protein level"/>
<protein>
    <recommendedName>
        <fullName>Citropin-3.1.2</fullName>
    </recommendedName>
    <component>
        <recommendedName>
            <fullName>Citropin-3.1.1</fullName>
        </recommendedName>
    </component>
    <component>
        <recommendedName>
            <fullName>Citropin-3.1</fullName>
        </recommendedName>
    </component>
</protein>
<sequence>DLFQVIKEKLKELTGGVIEGIQGV</sequence>
<reference key="1">
    <citation type="journal article" date="1999" name="Eur. J. Biochem.">
        <title>Host defence peptides from the skin glands of the Australian blue mountains tree-frog Litoria citropa. Solution structure of the antibacterial peptide citropin 1.1.</title>
        <authorList>
            <person name="Wegener K.L."/>
            <person name="Wabnitz P.A."/>
            <person name="Carver J.A."/>
            <person name="Bowie J.H."/>
            <person name="Chia B.C.S."/>
            <person name="Wallace J.C."/>
            <person name="Tyler M.J."/>
        </authorList>
    </citation>
    <scope>PROTEIN SEQUENCE</scope>
    <source>
        <tissue>Skin secretion</tissue>
    </source>
</reference>